<accession>A5IJW5</accession>
<proteinExistence type="inferred from homology"/>
<reference key="1">
    <citation type="submission" date="2007-05" db="EMBL/GenBank/DDBJ databases">
        <title>Complete sequence of Thermotoga petrophila RKU-1.</title>
        <authorList>
            <consortium name="US DOE Joint Genome Institute"/>
            <person name="Copeland A."/>
            <person name="Lucas S."/>
            <person name="Lapidus A."/>
            <person name="Barry K."/>
            <person name="Glavina del Rio T."/>
            <person name="Dalin E."/>
            <person name="Tice H."/>
            <person name="Pitluck S."/>
            <person name="Sims D."/>
            <person name="Brettin T."/>
            <person name="Bruce D."/>
            <person name="Detter J.C."/>
            <person name="Han C."/>
            <person name="Tapia R."/>
            <person name="Schmutz J."/>
            <person name="Larimer F."/>
            <person name="Land M."/>
            <person name="Hauser L."/>
            <person name="Kyrpides N."/>
            <person name="Mikhailova N."/>
            <person name="Nelson K."/>
            <person name="Gogarten J.P."/>
            <person name="Noll K."/>
            <person name="Richardson P."/>
        </authorList>
    </citation>
    <scope>NUCLEOTIDE SEQUENCE [LARGE SCALE GENOMIC DNA]</scope>
    <source>
        <strain>ATCC BAA-488 / DSM 13995 / JCM 10881 / RKU-1</strain>
    </source>
</reference>
<protein>
    <recommendedName>
        <fullName evidence="1">Large ribosomal subunit protein uL10</fullName>
    </recommendedName>
    <alternativeName>
        <fullName evidence="2">50S ribosomal protein L10</fullName>
    </alternativeName>
</protein>
<dbReference type="EMBL" id="CP000702">
    <property type="protein sequence ID" value="ABQ46488.1"/>
    <property type="molecule type" value="Genomic_DNA"/>
</dbReference>
<dbReference type="RefSeq" id="WP_011943106.1">
    <property type="nucleotide sequence ID" value="NC_009486.1"/>
</dbReference>
<dbReference type="SMR" id="A5IJW5"/>
<dbReference type="STRING" id="390874.Tpet_0464"/>
<dbReference type="KEGG" id="tpt:Tpet_0464"/>
<dbReference type="eggNOG" id="COG0244">
    <property type="taxonomic scope" value="Bacteria"/>
</dbReference>
<dbReference type="HOGENOM" id="CLU_092227_1_2_0"/>
<dbReference type="Proteomes" id="UP000006558">
    <property type="component" value="Chromosome"/>
</dbReference>
<dbReference type="GO" id="GO:0015934">
    <property type="term" value="C:large ribosomal subunit"/>
    <property type="evidence" value="ECO:0007669"/>
    <property type="project" value="InterPro"/>
</dbReference>
<dbReference type="GO" id="GO:0070180">
    <property type="term" value="F:large ribosomal subunit rRNA binding"/>
    <property type="evidence" value="ECO:0007669"/>
    <property type="project" value="UniProtKB-UniRule"/>
</dbReference>
<dbReference type="GO" id="GO:0003735">
    <property type="term" value="F:structural constituent of ribosome"/>
    <property type="evidence" value="ECO:0007669"/>
    <property type="project" value="InterPro"/>
</dbReference>
<dbReference type="GO" id="GO:0006412">
    <property type="term" value="P:translation"/>
    <property type="evidence" value="ECO:0007669"/>
    <property type="project" value="UniProtKB-UniRule"/>
</dbReference>
<dbReference type="CDD" id="cd05797">
    <property type="entry name" value="Ribosomal_L10"/>
    <property type="match status" value="1"/>
</dbReference>
<dbReference type="Gene3D" id="3.30.70.1730">
    <property type="match status" value="1"/>
</dbReference>
<dbReference type="Gene3D" id="6.10.250.290">
    <property type="match status" value="1"/>
</dbReference>
<dbReference type="HAMAP" id="MF_00362">
    <property type="entry name" value="Ribosomal_uL10"/>
    <property type="match status" value="1"/>
</dbReference>
<dbReference type="InterPro" id="IPR001790">
    <property type="entry name" value="Ribosomal_uL10"/>
</dbReference>
<dbReference type="InterPro" id="IPR043141">
    <property type="entry name" value="Ribosomal_uL10-like_sf"/>
</dbReference>
<dbReference type="InterPro" id="IPR022973">
    <property type="entry name" value="Ribosomal_uL10_bac"/>
</dbReference>
<dbReference type="InterPro" id="IPR047865">
    <property type="entry name" value="Ribosomal_uL10_bac_type"/>
</dbReference>
<dbReference type="InterPro" id="IPR002363">
    <property type="entry name" value="Ribosomal_uL10_CS_bac"/>
</dbReference>
<dbReference type="NCBIfam" id="NF000955">
    <property type="entry name" value="PRK00099.1-1"/>
    <property type="match status" value="1"/>
</dbReference>
<dbReference type="PANTHER" id="PTHR11560">
    <property type="entry name" value="39S RIBOSOMAL PROTEIN L10, MITOCHONDRIAL"/>
    <property type="match status" value="1"/>
</dbReference>
<dbReference type="Pfam" id="PF00466">
    <property type="entry name" value="Ribosomal_L10"/>
    <property type="match status" value="1"/>
</dbReference>
<dbReference type="SUPFAM" id="SSF160369">
    <property type="entry name" value="Ribosomal protein L10-like"/>
    <property type="match status" value="1"/>
</dbReference>
<dbReference type="PROSITE" id="PS01109">
    <property type="entry name" value="RIBOSOMAL_L10"/>
    <property type="match status" value="1"/>
</dbReference>
<organism>
    <name type="scientific">Thermotoga petrophila (strain ATCC BAA-488 / DSM 13995 / JCM 10881 / RKU-1)</name>
    <dbReference type="NCBI Taxonomy" id="390874"/>
    <lineage>
        <taxon>Bacteria</taxon>
        <taxon>Thermotogati</taxon>
        <taxon>Thermotogota</taxon>
        <taxon>Thermotogae</taxon>
        <taxon>Thermotogales</taxon>
        <taxon>Thermotogaceae</taxon>
        <taxon>Thermotoga</taxon>
    </lineage>
</organism>
<sequence length="179" mass="20295">MLTRQQKELIVEEMSEIFKKTSLILFADFLGFTVADLTELRSKLREKYGDGARFRVVKNTLLNLALKNAEYEGYEEFLKGPTAVLYVTEGDPVEAVKIVYNFYKDKKADLSRLKGGFLEGKKFTAEEVENIAKLPSKEELYAMLVGRVKAPITGLVFVLSGILRNLVYVLNAIKEKKSE</sequence>
<feature type="chain" id="PRO_1000005614" description="Large ribosomal subunit protein uL10">
    <location>
        <begin position="1"/>
        <end position="179"/>
    </location>
</feature>
<evidence type="ECO:0000255" key="1">
    <source>
        <dbReference type="HAMAP-Rule" id="MF_00362"/>
    </source>
</evidence>
<evidence type="ECO:0000305" key="2"/>
<name>RL10_THEP1</name>
<gene>
    <name evidence="1" type="primary">rplJ</name>
    <name type="ordered locus">Tpet_0464</name>
</gene>
<keyword id="KW-0687">Ribonucleoprotein</keyword>
<keyword id="KW-0689">Ribosomal protein</keyword>
<keyword id="KW-0694">RNA-binding</keyword>
<keyword id="KW-0699">rRNA-binding</keyword>
<comment type="function">
    <text evidence="1">Forms part of the ribosomal stalk, playing a central role in the interaction of the ribosome with GTP-bound translation factors.</text>
</comment>
<comment type="subunit">
    <text evidence="1">Part of the ribosomal stalk of the 50S ribosomal subunit. The N-terminus interacts with L11 and the large rRNA to form the base of the stalk. The C-terminus forms an elongated spine to which L12 dimers bind in a sequential fashion forming a multimeric L10(L12)X complex.</text>
</comment>
<comment type="similarity">
    <text evidence="1">Belongs to the universal ribosomal protein uL10 family.</text>
</comment>